<reference key="1">
    <citation type="journal article" date="2009" name="PLoS ONE">
        <title>Salmonella paratyphi C: genetic divergence from Salmonella choleraesuis and pathogenic convergence with Salmonella typhi.</title>
        <authorList>
            <person name="Liu W.-Q."/>
            <person name="Feng Y."/>
            <person name="Wang Y."/>
            <person name="Zou Q.-H."/>
            <person name="Chen F."/>
            <person name="Guo J.-T."/>
            <person name="Peng Y.-H."/>
            <person name="Jin Y."/>
            <person name="Li Y.-G."/>
            <person name="Hu S.-N."/>
            <person name="Johnston R.N."/>
            <person name="Liu G.-R."/>
            <person name="Liu S.-L."/>
        </authorList>
    </citation>
    <scope>NUCLEOTIDE SEQUENCE [LARGE SCALE GENOMIC DNA]</scope>
    <source>
        <strain>RKS4594</strain>
    </source>
</reference>
<proteinExistence type="inferred from homology"/>
<organism>
    <name type="scientific">Salmonella paratyphi C (strain RKS4594)</name>
    <dbReference type="NCBI Taxonomy" id="476213"/>
    <lineage>
        <taxon>Bacteria</taxon>
        <taxon>Pseudomonadati</taxon>
        <taxon>Pseudomonadota</taxon>
        <taxon>Gammaproteobacteria</taxon>
        <taxon>Enterobacterales</taxon>
        <taxon>Enterobacteriaceae</taxon>
        <taxon>Salmonella</taxon>
    </lineage>
</organism>
<name>FABA_SALPC</name>
<keyword id="KW-0963">Cytoplasm</keyword>
<keyword id="KW-0275">Fatty acid biosynthesis</keyword>
<keyword id="KW-0276">Fatty acid metabolism</keyword>
<keyword id="KW-0413">Isomerase</keyword>
<keyword id="KW-0444">Lipid biosynthesis</keyword>
<keyword id="KW-0443">Lipid metabolism</keyword>
<keyword id="KW-0456">Lyase</keyword>
<dbReference type="EC" id="4.2.1.59" evidence="1"/>
<dbReference type="EC" id="5.3.3.14" evidence="1"/>
<dbReference type="EMBL" id="CP000857">
    <property type="protein sequence ID" value="ACN46783.1"/>
    <property type="molecule type" value="Genomic_DNA"/>
</dbReference>
<dbReference type="RefSeq" id="WP_000227928.1">
    <property type="nucleotide sequence ID" value="NC_012125.1"/>
</dbReference>
<dbReference type="SMR" id="C0Q8D8"/>
<dbReference type="KEGG" id="sei:SPC_2682"/>
<dbReference type="HOGENOM" id="CLU_097925_0_0_6"/>
<dbReference type="UniPathway" id="UPA00094"/>
<dbReference type="Proteomes" id="UP000001599">
    <property type="component" value="Chromosome"/>
</dbReference>
<dbReference type="GO" id="GO:0005737">
    <property type="term" value="C:cytoplasm"/>
    <property type="evidence" value="ECO:0007669"/>
    <property type="project" value="UniProtKB-SubCell"/>
</dbReference>
<dbReference type="GO" id="GO:0019171">
    <property type="term" value="F:(3R)-hydroxyacyl-[acyl-carrier-protein] dehydratase activity"/>
    <property type="evidence" value="ECO:0007669"/>
    <property type="project" value="UniProtKB-UniRule"/>
</dbReference>
<dbReference type="GO" id="GO:0034017">
    <property type="term" value="F:trans-2-decenoyl-acyl-carrier-protein isomerase activity"/>
    <property type="evidence" value="ECO:0007669"/>
    <property type="project" value="UniProtKB-UniRule"/>
</dbReference>
<dbReference type="GO" id="GO:0006636">
    <property type="term" value="P:unsaturated fatty acid biosynthetic process"/>
    <property type="evidence" value="ECO:0007669"/>
    <property type="project" value="UniProtKB-UniRule"/>
</dbReference>
<dbReference type="CDD" id="cd01287">
    <property type="entry name" value="FabA"/>
    <property type="match status" value="1"/>
</dbReference>
<dbReference type="FunFam" id="3.10.129.10:FF:000003">
    <property type="entry name" value="3-hydroxydecanoyl-[acyl-carrier-protein] dehydratase"/>
    <property type="match status" value="1"/>
</dbReference>
<dbReference type="Gene3D" id="3.10.129.10">
    <property type="entry name" value="Hotdog Thioesterase"/>
    <property type="match status" value="1"/>
</dbReference>
<dbReference type="HAMAP" id="MF_00405">
    <property type="entry name" value="FabA"/>
    <property type="match status" value="1"/>
</dbReference>
<dbReference type="InterPro" id="IPR010083">
    <property type="entry name" value="FabA"/>
</dbReference>
<dbReference type="InterPro" id="IPR013114">
    <property type="entry name" value="FabA_FabZ"/>
</dbReference>
<dbReference type="InterPro" id="IPR029069">
    <property type="entry name" value="HotDog_dom_sf"/>
</dbReference>
<dbReference type="NCBIfam" id="TIGR01749">
    <property type="entry name" value="fabA"/>
    <property type="match status" value="1"/>
</dbReference>
<dbReference type="NCBIfam" id="NF003509">
    <property type="entry name" value="PRK05174.1"/>
    <property type="match status" value="1"/>
</dbReference>
<dbReference type="PANTHER" id="PTHR30272">
    <property type="entry name" value="3-HYDROXYACYL-[ACYL-CARRIER-PROTEIN] DEHYDRATASE"/>
    <property type="match status" value="1"/>
</dbReference>
<dbReference type="PANTHER" id="PTHR30272:SF8">
    <property type="entry name" value="3-HYDROXYDECANOYL-[ACYL-CARRIER-PROTEIN] DEHYDRATASE"/>
    <property type="match status" value="1"/>
</dbReference>
<dbReference type="Pfam" id="PF07977">
    <property type="entry name" value="FabA"/>
    <property type="match status" value="1"/>
</dbReference>
<dbReference type="SUPFAM" id="SSF54637">
    <property type="entry name" value="Thioesterase/thiol ester dehydrase-isomerase"/>
    <property type="match status" value="1"/>
</dbReference>
<protein>
    <recommendedName>
        <fullName evidence="1">3-hydroxydecanoyl-[acyl-carrier-protein] dehydratase</fullName>
        <ecNumber evidence="1">4.2.1.59</ecNumber>
    </recommendedName>
    <alternativeName>
        <fullName evidence="1">3-hydroxyacyl-[acyl-carrier-protein] dehydratase FabA</fullName>
    </alternativeName>
    <alternativeName>
        <fullName evidence="1">Beta-hydroxydecanoyl thioester dehydrase</fullName>
    </alternativeName>
    <alternativeName>
        <fullName evidence="1">Trans-2-decenoyl-[acyl-carrier-protein] isomerase</fullName>
        <ecNumber evidence="1">5.3.3.14</ecNumber>
    </alternativeName>
</protein>
<evidence type="ECO:0000255" key="1">
    <source>
        <dbReference type="HAMAP-Rule" id="MF_00405"/>
    </source>
</evidence>
<comment type="function">
    <text evidence="1">Necessary for the introduction of cis unsaturation into fatty acids. Catalyzes the dehydration of (3R)-3-hydroxydecanoyl-ACP to E-(2)-decenoyl-ACP and then its isomerization to Z-(3)-decenoyl-ACP. Can catalyze the dehydratase reaction for beta-hydroxyacyl-ACPs with saturated chain lengths up to 16:0, being most active on intermediate chain length.</text>
</comment>
<comment type="catalytic activity">
    <reaction evidence="1">
        <text>a (3R)-hydroxyacyl-[ACP] = a (2E)-enoyl-[ACP] + H2O</text>
        <dbReference type="Rhea" id="RHEA:13097"/>
        <dbReference type="Rhea" id="RHEA-COMP:9925"/>
        <dbReference type="Rhea" id="RHEA-COMP:9945"/>
        <dbReference type="ChEBI" id="CHEBI:15377"/>
        <dbReference type="ChEBI" id="CHEBI:78784"/>
        <dbReference type="ChEBI" id="CHEBI:78827"/>
        <dbReference type="EC" id="4.2.1.59"/>
    </reaction>
</comment>
<comment type="catalytic activity">
    <reaction evidence="1">
        <text>(3R)-hydroxydecanoyl-[ACP] = (2E)-decenoyl-[ACP] + H2O</text>
        <dbReference type="Rhea" id="RHEA:41860"/>
        <dbReference type="Rhea" id="RHEA-COMP:9638"/>
        <dbReference type="Rhea" id="RHEA-COMP:9639"/>
        <dbReference type="ChEBI" id="CHEBI:15377"/>
        <dbReference type="ChEBI" id="CHEBI:78466"/>
        <dbReference type="ChEBI" id="CHEBI:78467"/>
    </reaction>
</comment>
<comment type="catalytic activity">
    <reaction evidence="1">
        <text>(2E)-decenoyl-[ACP] = (3Z)-decenoyl-[ACP]</text>
        <dbReference type="Rhea" id="RHEA:23568"/>
        <dbReference type="Rhea" id="RHEA-COMP:9639"/>
        <dbReference type="Rhea" id="RHEA-COMP:9927"/>
        <dbReference type="ChEBI" id="CHEBI:78467"/>
        <dbReference type="ChEBI" id="CHEBI:78798"/>
        <dbReference type="EC" id="5.3.3.14"/>
    </reaction>
</comment>
<comment type="pathway">
    <text evidence="1">Lipid metabolism; fatty acid biosynthesis.</text>
</comment>
<comment type="subunit">
    <text evidence="1">Homodimer.</text>
</comment>
<comment type="subcellular location">
    <subcellularLocation>
        <location evidence="1">Cytoplasm</location>
    </subcellularLocation>
</comment>
<comment type="similarity">
    <text evidence="1">Belongs to the thioester dehydratase family. FabA subfamily.</text>
</comment>
<feature type="chain" id="PRO_1000201205" description="3-hydroxydecanoyl-[acyl-carrier-protein] dehydratase">
    <location>
        <begin position="1"/>
        <end position="172"/>
    </location>
</feature>
<feature type="active site" evidence="1">
    <location>
        <position position="71"/>
    </location>
</feature>
<gene>
    <name evidence="1" type="primary">fabA</name>
    <name type="ordered locus">SPC_2682</name>
</gene>
<accession>C0Q8D8</accession>
<sequence>MVDKRESYTKEDLLASGRGELFGAKGPQLPAPNMLMMDRVVKMTETGGNFDKGYVEAELDINPDLWFFGCHFIGDPVMPGCLGLDAMWQLVGFYLGWLGGEGKGRALGVGEVKFTGQVLPTARKVTYRIHFKRIVNRRLIMGLADGEVLVDGRLIYTAHDLKVGLFQDTSAF</sequence>